<comment type="catalytic activity">
    <reaction evidence="1">
        <text>tRNA(Phe) + L-phenylalanine + ATP = L-phenylalanyl-tRNA(Phe) + AMP + diphosphate + H(+)</text>
        <dbReference type="Rhea" id="RHEA:19413"/>
        <dbReference type="Rhea" id="RHEA-COMP:9668"/>
        <dbReference type="Rhea" id="RHEA-COMP:9699"/>
        <dbReference type="ChEBI" id="CHEBI:15378"/>
        <dbReference type="ChEBI" id="CHEBI:30616"/>
        <dbReference type="ChEBI" id="CHEBI:33019"/>
        <dbReference type="ChEBI" id="CHEBI:58095"/>
        <dbReference type="ChEBI" id="CHEBI:78442"/>
        <dbReference type="ChEBI" id="CHEBI:78531"/>
        <dbReference type="ChEBI" id="CHEBI:456215"/>
        <dbReference type="EC" id="6.1.1.20"/>
    </reaction>
</comment>
<comment type="cofactor">
    <cofactor evidence="1">
        <name>Mg(2+)</name>
        <dbReference type="ChEBI" id="CHEBI:18420"/>
    </cofactor>
    <text evidence="1">Binds 2 magnesium ions per tetramer.</text>
</comment>
<comment type="subunit">
    <text evidence="1">Tetramer of two alpha and two beta subunits.</text>
</comment>
<comment type="subcellular location">
    <subcellularLocation>
        <location evidence="1">Cytoplasm</location>
    </subcellularLocation>
</comment>
<comment type="similarity">
    <text evidence="1">Belongs to the phenylalanyl-tRNA synthetase beta subunit family. Type 1 subfamily.</text>
</comment>
<name>SYFB_RHORT</name>
<evidence type="ECO:0000255" key="1">
    <source>
        <dbReference type="HAMAP-Rule" id="MF_00283"/>
    </source>
</evidence>
<proteinExistence type="inferred from homology"/>
<accession>Q2RNH7</accession>
<organism>
    <name type="scientific">Rhodospirillum rubrum (strain ATCC 11170 / ATH 1.1.1 / DSM 467 / LMG 4362 / NCIMB 8255 / S1)</name>
    <dbReference type="NCBI Taxonomy" id="269796"/>
    <lineage>
        <taxon>Bacteria</taxon>
        <taxon>Pseudomonadati</taxon>
        <taxon>Pseudomonadota</taxon>
        <taxon>Alphaproteobacteria</taxon>
        <taxon>Rhodospirillales</taxon>
        <taxon>Rhodospirillaceae</taxon>
        <taxon>Rhodospirillum</taxon>
    </lineage>
</organism>
<protein>
    <recommendedName>
        <fullName evidence="1">Phenylalanine--tRNA ligase beta subunit</fullName>
        <ecNumber evidence="1">6.1.1.20</ecNumber>
    </recommendedName>
    <alternativeName>
        <fullName evidence="1">Phenylalanyl-tRNA synthetase beta subunit</fullName>
        <shortName evidence="1">PheRS</shortName>
    </alternativeName>
</protein>
<sequence length="800" mass="83909">MKFTIGWLKDHLDTQASVADIAEKLTALGLEVDAIEDPTAALAPFVVGHVIEAGPHPDADRLKLCRVDSGTDILQIVCGAPNARTGLKVALALPGAVIPATGDVLKKGKIRGIESQGMMCSTRELGLGEDHDGIIELPADTPVGVPLVDVLALDPVIDIAITPNRADALGVRGIARDLAAGGLGGVIADTLTAIPGRFPSPIGVAIDPETLASGACSHYVGRYFRGVRNGESPAWLKDRLNAIGVRPISLLVDITNYVTFDRARPLHVFDADKLTGTTITARPARQGEILRALDGRSYTLDAPVVAIADGAGPQGLGGIMGGEDTGVDENTVNVFLESALFDPANTAAAGRFLGIDSDARYRFERGVDPESCLLGAELATRMILDLCGGEASELVIAGAPPVWRRTIALRPARVARLGGVAVERAEMVAKLRALGCTVEDDGAEALRVDPPSWRVDIGAEHDLIEEVVRLHGFDLVPAVPLPRDPMPKAVLTPGQRRMITVKRTLATRGMLEAVTWSFLPRAVAKGFGGGQDALVLANPISSDLDAMRPSILPNLIAAAGRNAARGYGDLGLFEVGPRFHGGEPGQQTLVAAGLRAGKIAPRHWSRPARDADLYDIKADVLAAIEAAGAPTASLQVSADAPAWFHPGRSGQIRLGRTVLAAFGEIHPAALALLDVKGPMVGFELDLDALPLPKGRPSKTRPPLTLSPFQPVARDFAFVVEAGVAGDAVIKAARGADKALITDVVIFDVYQGDRLEAGRKSLALSVTLQPTDHTLSDEEIEAVSARIVGAVTKLTGGSLRS</sequence>
<feature type="chain" id="PRO_0000232083" description="Phenylalanine--tRNA ligase beta subunit">
    <location>
        <begin position="1"/>
        <end position="800"/>
    </location>
</feature>
<feature type="domain" description="tRNA-binding" evidence="1">
    <location>
        <begin position="39"/>
        <end position="148"/>
    </location>
</feature>
<feature type="domain" description="B5" evidence="1">
    <location>
        <begin position="402"/>
        <end position="478"/>
    </location>
</feature>
<feature type="domain" description="FDX-ACB" evidence="1">
    <location>
        <begin position="706"/>
        <end position="799"/>
    </location>
</feature>
<feature type="binding site" evidence="1">
    <location>
        <position position="456"/>
    </location>
    <ligand>
        <name>Mg(2+)</name>
        <dbReference type="ChEBI" id="CHEBI:18420"/>
        <note>shared with alpha subunit</note>
    </ligand>
</feature>
<feature type="binding site" evidence="1">
    <location>
        <position position="462"/>
    </location>
    <ligand>
        <name>Mg(2+)</name>
        <dbReference type="ChEBI" id="CHEBI:18420"/>
        <note>shared with alpha subunit</note>
    </ligand>
</feature>
<feature type="binding site" evidence="1">
    <location>
        <position position="465"/>
    </location>
    <ligand>
        <name>Mg(2+)</name>
        <dbReference type="ChEBI" id="CHEBI:18420"/>
        <note>shared with alpha subunit</note>
    </ligand>
</feature>
<feature type="binding site" evidence="1">
    <location>
        <position position="466"/>
    </location>
    <ligand>
        <name>Mg(2+)</name>
        <dbReference type="ChEBI" id="CHEBI:18420"/>
        <note>shared with alpha subunit</note>
    </ligand>
</feature>
<reference key="1">
    <citation type="journal article" date="2011" name="Stand. Genomic Sci.">
        <title>Complete genome sequence of Rhodospirillum rubrum type strain (S1).</title>
        <authorList>
            <person name="Munk A.C."/>
            <person name="Copeland A."/>
            <person name="Lucas S."/>
            <person name="Lapidus A."/>
            <person name="Del Rio T.G."/>
            <person name="Barry K."/>
            <person name="Detter J.C."/>
            <person name="Hammon N."/>
            <person name="Israni S."/>
            <person name="Pitluck S."/>
            <person name="Brettin T."/>
            <person name="Bruce D."/>
            <person name="Han C."/>
            <person name="Tapia R."/>
            <person name="Gilna P."/>
            <person name="Schmutz J."/>
            <person name="Larimer F."/>
            <person name="Land M."/>
            <person name="Kyrpides N.C."/>
            <person name="Mavromatis K."/>
            <person name="Richardson P."/>
            <person name="Rohde M."/>
            <person name="Goeker M."/>
            <person name="Klenk H.P."/>
            <person name="Zhang Y."/>
            <person name="Roberts G.P."/>
            <person name="Reslewic S."/>
            <person name="Schwartz D.C."/>
        </authorList>
    </citation>
    <scope>NUCLEOTIDE SEQUENCE [LARGE SCALE GENOMIC DNA]</scope>
    <source>
        <strain>ATCC 11170 / ATH 1.1.1 / DSM 467 / LMG 4362 / NCIMB 8255 / S1</strain>
    </source>
</reference>
<dbReference type="EC" id="6.1.1.20" evidence="1"/>
<dbReference type="EMBL" id="CP000230">
    <property type="protein sequence ID" value="ABC24318.1"/>
    <property type="molecule type" value="Genomic_DNA"/>
</dbReference>
<dbReference type="RefSeq" id="WP_011391271.1">
    <property type="nucleotide sequence ID" value="NC_007643.1"/>
</dbReference>
<dbReference type="RefSeq" id="YP_428605.1">
    <property type="nucleotide sequence ID" value="NC_007643.1"/>
</dbReference>
<dbReference type="SMR" id="Q2RNH7"/>
<dbReference type="STRING" id="269796.Rru_A3524"/>
<dbReference type="EnsemblBacteria" id="ABC24318">
    <property type="protein sequence ID" value="ABC24318"/>
    <property type="gene ID" value="Rru_A3524"/>
</dbReference>
<dbReference type="KEGG" id="rru:Rru_A3524"/>
<dbReference type="PATRIC" id="fig|269796.9.peg.3641"/>
<dbReference type="eggNOG" id="COG0072">
    <property type="taxonomic scope" value="Bacteria"/>
</dbReference>
<dbReference type="HOGENOM" id="CLU_016891_0_0_5"/>
<dbReference type="PhylomeDB" id="Q2RNH7"/>
<dbReference type="Proteomes" id="UP000001929">
    <property type="component" value="Chromosome"/>
</dbReference>
<dbReference type="GO" id="GO:0009328">
    <property type="term" value="C:phenylalanine-tRNA ligase complex"/>
    <property type="evidence" value="ECO:0007669"/>
    <property type="project" value="TreeGrafter"/>
</dbReference>
<dbReference type="GO" id="GO:0005524">
    <property type="term" value="F:ATP binding"/>
    <property type="evidence" value="ECO:0007669"/>
    <property type="project" value="UniProtKB-UniRule"/>
</dbReference>
<dbReference type="GO" id="GO:0000287">
    <property type="term" value="F:magnesium ion binding"/>
    <property type="evidence" value="ECO:0007669"/>
    <property type="project" value="UniProtKB-UniRule"/>
</dbReference>
<dbReference type="GO" id="GO:0004826">
    <property type="term" value="F:phenylalanine-tRNA ligase activity"/>
    <property type="evidence" value="ECO:0007669"/>
    <property type="project" value="UniProtKB-UniRule"/>
</dbReference>
<dbReference type="GO" id="GO:0000049">
    <property type="term" value="F:tRNA binding"/>
    <property type="evidence" value="ECO:0007669"/>
    <property type="project" value="UniProtKB-KW"/>
</dbReference>
<dbReference type="GO" id="GO:0006432">
    <property type="term" value="P:phenylalanyl-tRNA aminoacylation"/>
    <property type="evidence" value="ECO:0007669"/>
    <property type="project" value="UniProtKB-UniRule"/>
</dbReference>
<dbReference type="CDD" id="cd00769">
    <property type="entry name" value="PheRS_beta_core"/>
    <property type="match status" value="1"/>
</dbReference>
<dbReference type="CDD" id="cd02796">
    <property type="entry name" value="tRNA_bind_bactPheRS"/>
    <property type="match status" value="1"/>
</dbReference>
<dbReference type="FunFam" id="2.40.50.140:FF:000045">
    <property type="entry name" value="Phenylalanine--tRNA ligase beta subunit"/>
    <property type="match status" value="1"/>
</dbReference>
<dbReference type="Gene3D" id="3.30.56.10">
    <property type="match status" value="2"/>
</dbReference>
<dbReference type="Gene3D" id="3.30.930.10">
    <property type="entry name" value="Bira Bifunctional Protein, Domain 2"/>
    <property type="match status" value="1"/>
</dbReference>
<dbReference type="Gene3D" id="3.30.70.380">
    <property type="entry name" value="Ferrodoxin-fold anticodon-binding domain"/>
    <property type="match status" value="1"/>
</dbReference>
<dbReference type="Gene3D" id="2.40.50.140">
    <property type="entry name" value="Nucleic acid-binding proteins"/>
    <property type="match status" value="1"/>
</dbReference>
<dbReference type="Gene3D" id="3.50.40.10">
    <property type="entry name" value="Phenylalanyl-trna Synthetase, Chain B, domain 3"/>
    <property type="match status" value="1"/>
</dbReference>
<dbReference type="HAMAP" id="MF_00283">
    <property type="entry name" value="Phe_tRNA_synth_beta1"/>
    <property type="match status" value="1"/>
</dbReference>
<dbReference type="InterPro" id="IPR045864">
    <property type="entry name" value="aa-tRNA-synth_II/BPL/LPL"/>
</dbReference>
<dbReference type="InterPro" id="IPR005146">
    <property type="entry name" value="B3/B4_tRNA-bd"/>
</dbReference>
<dbReference type="InterPro" id="IPR009061">
    <property type="entry name" value="DNA-bd_dom_put_sf"/>
</dbReference>
<dbReference type="InterPro" id="IPR005121">
    <property type="entry name" value="Fdx_antiC-bd"/>
</dbReference>
<dbReference type="InterPro" id="IPR036690">
    <property type="entry name" value="Fdx_antiC-bd_sf"/>
</dbReference>
<dbReference type="InterPro" id="IPR012340">
    <property type="entry name" value="NA-bd_OB-fold"/>
</dbReference>
<dbReference type="InterPro" id="IPR045060">
    <property type="entry name" value="Phe-tRNA-ligase_IIc_bsu"/>
</dbReference>
<dbReference type="InterPro" id="IPR004532">
    <property type="entry name" value="Phe-tRNA-ligase_IIc_bsu_bact"/>
</dbReference>
<dbReference type="InterPro" id="IPR020825">
    <property type="entry name" value="Phe-tRNA_synthase-like_B3/B4"/>
</dbReference>
<dbReference type="InterPro" id="IPR041616">
    <property type="entry name" value="PheRS_beta_core"/>
</dbReference>
<dbReference type="InterPro" id="IPR002547">
    <property type="entry name" value="tRNA-bd_dom"/>
</dbReference>
<dbReference type="InterPro" id="IPR033714">
    <property type="entry name" value="tRNA_bind_bactPheRS"/>
</dbReference>
<dbReference type="InterPro" id="IPR005147">
    <property type="entry name" value="tRNA_synthase_B5-dom"/>
</dbReference>
<dbReference type="NCBIfam" id="TIGR00472">
    <property type="entry name" value="pheT_bact"/>
    <property type="match status" value="1"/>
</dbReference>
<dbReference type="NCBIfam" id="NF045760">
    <property type="entry name" value="YtpR"/>
    <property type="match status" value="1"/>
</dbReference>
<dbReference type="PANTHER" id="PTHR10947:SF0">
    <property type="entry name" value="PHENYLALANINE--TRNA LIGASE BETA SUBUNIT"/>
    <property type="match status" value="1"/>
</dbReference>
<dbReference type="PANTHER" id="PTHR10947">
    <property type="entry name" value="PHENYLALANYL-TRNA SYNTHETASE BETA CHAIN AND LEUCINE-RICH REPEAT-CONTAINING PROTEIN 47"/>
    <property type="match status" value="1"/>
</dbReference>
<dbReference type="Pfam" id="PF03483">
    <property type="entry name" value="B3_4"/>
    <property type="match status" value="1"/>
</dbReference>
<dbReference type="Pfam" id="PF03484">
    <property type="entry name" value="B5"/>
    <property type="match status" value="1"/>
</dbReference>
<dbReference type="Pfam" id="PF03147">
    <property type="entry name" value="FDX-ACB"/>
    <property type="match status" value="1"/>
</dbReference>
<dbReference type="Pfam" id="PF01588">
    <property type="entry name" value="tRNA_bind"/>
    <property type="match status" value="1"/>
</dbReference>
<dbReference type="Pfam" id="PF17759">
    <property type="entry name" value="tRNA_synthFbeta"/>
    <property type="match status" value="1"/>
</dbReference>
<dbReference type="SMART" id="SM00873">
    <property type="entry name" value="B3_4"/>
    <property type="match status" value="1"/>
</dbReference>
<dbReference type="SMART" id="SM00874">
    <property type="entry name" value="B5"/>
    <property type="match status" value="1"/>
</dbReference>
<dbReference type="SMART" id="SM00896">
    <property type="entry name" value="FDX-ACB"/>
    <property type="match status" value="1"/>
</dbReference>
<dbReference type="SUPFAM" id="SSF54991">
    <property type="entry name" value="Anticodon-binding domain of PheRS"/>
    <property type="match status" value="1"/>
</dbReference>
<dbReference type="SUPFAM" id="SSF55681">
    <property type="entry name" value="Class II aaRS and biotin synthetases"/>
    <property type="match status" value="1"/>
</dbReference>
<dbReference type="SUPFAM" id="SSF50249">
    <property type="entry name" value="Nucleic acid-binding proteins"/>
    <property type="match status" value="1"/>
</dbReference>
<dbReference type="SUPFAM" id="SSF56037">
    <property type="entry name" value="PheT/TilS domain"/>
    <property type="match status" value="1"/>
</dbReference>
<dbReference type="SUPFAM" id="SSF46955">
    <property type="entry name" value="Putative DNA-binding domain"/>
    <property type="match status" value="1"/>
</dbReference>
<dbReference type="PROSITE" id="PS51483">
    <property type="entry name" value="B5"/>
    <property type="match status" value="1"/>
</dbReference>
<dbReference type="PROSITE" id="PS51447">
    <property type="entry name" value="FDX_ACB"/>
    <property type="match status" value="1"/>
</dbReference>
<dbReference type="PROSITE" id="PS50886">
    <property type="entry name" value="TRBD"/>
    <property type="match status" value="1"/>
</dbReference>
<keyword id="KW-0030">Aminoacyl-tRNA synthetase</keyword>
<keyword id="KW-0067">ATP-binding</keyword>
<keyword id="KW-0963">Cytoplasm</keyword>
<keyword id="KW-0436">Ligase</keyword>
<keyword id="KW-0460">Magnesium</keyword>
<keyword id="KW-0479">Metal-binding</keyword>
<keyword id="KW-0547">Nucleotide-binding</keyword>
<keyword id="KW-0648">Protein biosynthesis</keyword>
<keyword id="KW-1185">Reference proteome</keyword>
<keyword id="KW-0694">RNA-binding</keyword>
<keyword id="KW-0820">tRNA-binding</keyword>
<gene>
    <name evidence="1" type="primary">pheT</name>
    <name type="ordered locus">Rru_A3524</name>
</gene>